<dbReference type="ConoServer" id="1621">
    <property type="toxin name" value="MVID"/>
</dbReference>
<dbReference type="GO" id="GO:0005576">
    <property type="term" value="C:extracellular region"/>
    <property type="evidence" value="ECO:0007669"/>
    <property type="project" value="UniProtKB-SubCell"/>
</dbReference>
<dbReference type="GO" id="GO:0044231">
    <property type="term" value="C:host cell presynaptic membrane"/>
    <property type="evidence" value="ECO:0007669"/>
    <property type="project" value="UniProtKB-KW"/>
</dbReference>
<dbReference type="GO" id="GO:0019871">
    <property type="term" value="F:sodium channel inhibitor activity"/>
    <property type="evidence" value="ECO:0007669"/>
    <property type="project" value="InterPro"/>
</dbReference>
<dbReference type="GO" id="GO:0090729">
    <property type="term" value="F:toxin activity"/>
    <property type="evidence" value="ECO:0007669"/>
    <property type="project" value="UniProtKB-KW"/>
</dbReference>
<dbReference type="InterPro" id="IPR012322">
    <property type="entry name" value="Conotoxin_d-typ_CS"/>
</dbReference>
<dbReference type="InterPro" id="IPR012321">
    <property type="entry name" value="Conotoxin_omega-typ_CS"/>
</dbReference>
<dbReference type="PROSITE" id="PS60005">
    <property type="entry name" value="DELTA_CONOTOXIN"/>
    <property type="match status" value="1"/>
</dbReference>
<organism>
    <name type="scientific">Conus magus</name>
    <name type="common">Magical cone</name>
    <dbReference type="NCBI Taxonomy" id="6492"/>
    <lineage>
        <taxon>Eukaryota</taxon>
        <taxon>Metazoa</taxon>
        <taxon>Spiralia</taxon>
        <taxon>Lophotrochozoa</taxon>
        <taxon>Mollusca</taxon>
        <taxon>Gastropoda</taxon>
        <taxon>Caenogastropoda</taxon>
        <taxon>Neogastropoda</taxon>
        <taxon>Conoidea</taxon>
        <taxon>Conidae</taxon>
        <taxon>Conus</taxon>
        <taxon>Pionoconus</taxon>
    </lineage>
</organism>
<reference key="1">
    <citation type="journal article" date="2001" name="Biochemistry">
        <title>Delta-conotoxin structure/function through a cladistic analysis.</title>
        <authorList>
            <person name="Bulaj G."/>
            <person name="DeLaCruz R."/>
            <person name="Azimi-Zonooz A."/>
            <person name="West P."/>
            <person name="Watkins M."/>
            <person name="Yoshikami D."/>
            <person name="Olivera B.M."/>
        </authorList>
    </citation>
    <scope>NUCLEOTIDE SEQUENCE [MRNA]</scope>
    <source>
        <tissue>Venom duct</tissue>
    </source>
</reference>
<protein>
    <recommendedName>
        <fullName>Delta-conotoxin-like MVID</fullName>
        <shortName>Delta-MVID</shortName>
    </recommendedName>
</protein>
<sequence length="32" mass="3384">EACYNAGTFCGIKPGLCCSAICLSFVCISFDF</sequence>
<accession>P69756</accession>
<feature type="peptide" id="PRO_0000044872" description="Delta-conotoxin-like MVID">
    <location>
        <begin position="1"/>
        <end position="32"/>
    </location>
</feature>
<feature type="modified residue" description="4-hydroxyproline" evidence="1">
    <location>
        <position position="14"/>
    </location>
</feature>
<feature type="disulfide bond" evidence="1">
    <location>
        <begin position="3"/>
        <end position="18"/>
    </location>
</feature>
<feature type="disulfide bond" evidence="1">
    <location>
        <begin position="10"/>
        <end position="22"/>
    </location>
</feature>
<feature type="disulfide bond" evidence="1">
    <location>
        <begin position="17"/>
        <end position="27"/>
    </location>
</feature>
<name>O16D_CONMA</name>
<keyword id="KW-1015">Disulfide bond</keyword>
<keyword id="KW-0379">Hydroxylation</keyword>
<keyword id="KW-0872">Ion channel impairing toxin</keyword>
<keyword id="KW-0960">Knottin</keyword>
<keyword id="KW-0528">Neurotoxin</keyword>
<keyword id="KW-0638">Presynaptic neurotoxin</keyword>
<keyword id="KW-0964">Secreted</keyword>
<keyword id="KW-0800">Toxin</keyword>
<keyword id="KW-0738">Voltage-gated sodium channel impairing toxin</keyword>
<evidence type="ECO:0000250" key="1"/>
<evidence type="ECO:0000305" key="2"/>
<proteinExistence type="evidence at transcript level"/>
<comment type="function">
    <text evidence="1">Delta-conotoxins bind to site 6 of voltage-gated sodium channels (Nav) and inhibit the inactivation process.</text>
</comment>
<comment type="subcellular location">
    <subcellularLocation>
        <location evidence="1">Secreted</location>
    </subcellularLocation>
</comment>
<comment type="tissue specificity">
    <text>Expressed by the venom duct.</text>
</comment>
<comment type="domain">
    <text evidence="1">The presence of a 'disulfide through disulfide knot' structurally defines this protein as a knottin.</text>
</comment>
<comment type="domain">
    <text>The cysteine framework is VI/VII (C-C-CC-C-C).</text>
</comment>
<comment type="similarity">
    <text evidence="2">Belongs to the conotoxin O1 superfamily.</text>
</comment>